<organism>
    <name type="scientific">Francisella tularensis subsp. holarctica (strain LVS)</name>
    <dbReference type="NCBI Taxonomy" id="376619"/>
    <lineage>
        <taxon>Bacteria</taxon>
        <taxon>Pseudomonadati</taxon>
        <taxon>Pseudomonadota</taxon>
        <taxon>Gammaproteobacteria</taxon>
        <taxon>Thiotrichales</taxon>
        <taxon>Francisellaceae</taxon>
        <taxon>Francisella</taxon>
    </lineage>
</organism>
<name>G6PI_FRATH</name>
<gene>
    <name evidence="1" type="primary">pgi</name>
    <name type="ordered locus">FTL_1476</name>
</gene>
<accession>Q2A2C5</accession>
<reference key="1">
    <citation type="submission" date="2006-03" db="EMBL/GenBank/DDBJ databases">
        <title>Complete genome sequence of Francisella tularensis LVS (Live Vaccine Strain).</title>
        <authorList>
            <person name="Chain P."/>
            <person name="Larimer F."/>
            <person name="Land M."/>
            <person name="Stilwagen S."/>
            <person name="Larsson P."/>
            <person name="Bearden S."/>
            <person name="Chu M."/>
            <person name="Oyston P."/>
            <person name="Forsman M."/>
            <person name="Andersson S."/>
            <person name="Lindler L."/>
            <person name="Titball R."/>
            <person name="Garcia E."/>
        </authorList>
    </citation>
    <scope>NUCLEOTIDE SEQUENCE [LARGE SCALE GENOMIC DNA]</scope>
    <source>
        <strain>LVS</strain>
    </source>
</reference>
<sequence>MLFCDDSKKYLKEQNINLKNEFDKDDKRVEKFSLKHQNIYFDYSKNLINNYILKSLLESAEKSSLKDKIKQMFNGAKINSTEHRAVLHTALRDLSSTPLIVDGQDIRQEVTKEKQRVKELVEKVVSGRWRGFSGKKITDIVNIGIGGSDLGPKMVVRALQPYHCTDLKVHFVSNVDADSLLQALHVVDPETTLFIIASKSFSTEETLLNSISAREWLLDHYEDEKAVANHFVAISSKLDKVKEFGIDLEHCYKMWDWVGGRYSLWSSIGMSIAFAIGYDNFEKLLAGAYSVDKYFKETEFSKNIPVIMALLASYYSCTYNSQSQALLPYDERLCYFVDYLQQADMESNGKSVNIAGGTVNYQTGVVLWGGVGTNGQHAFHQLLHQGNIFIPVDFIAIATSHHNYDNHQQALLANCFAQSQALMFGQSYDMVYNELLKSGLNETQAKKLAAHKVIPGNRPSTTILLDELSPYSLGALIALYEHKIFVQGVLWDINSYDQWGVELGKKLGKNILKAMNDDSSDEYQNLDDSTRQLIAKVKNK</sequence>
<feature type="chain" id="PRO_0000252621" description="Glucose-6-phosphate isomerase">
    <location>
        <begin position="1"/>
        <end position="540"/>
    </location>
</feature>
<feature type="active site" description="Proton donor" evidence="1">
    <location>
        <position position="346"/>
    </location>
</feature>
<feature type="active site" evidence="1">
    <location>
        <position position="377"/>
    </location>
</feature>
<feature type="active site" evidence="1">
    <location>
        <position position="505"/>
    </location>
</feature>
<evidence type="ECO:0000255" key="1">
    <source>
        <dbReference type="HAMAP-Rule" id="MF_00473"/>
    </source>
</evidence>
<proteinExistence type="inferred from homology"/>
<protein>
    <recommendedName>
        <fullName evidence="1">Glucose-6-phosphate isomerase</fullName>
        <shortName evidence="1">GPI</shortName>
        <ecNumber evidence="1">5.3.1.9</ecNumber>
    </recommendedName>
    <alternativeName>
        <fullName evidence="1">Phosphoglucose isomerase</fullName>
        <shortName evidence="1">PGI</shortName>
    </alternativeName>
    <alternativeName>
        <fullName evidence="1">Phosphohexose isomerase</fullName>
        <shortName evidence="1">PHI</shortName>
    </alternativeName>
</protein>
<keyword id="KW-0963">Cytoplasm</keyword>
<keyword id="KW-0312">Gluconeogenesis</keyword>
<keyword id="KW-0324">Glycolysis</keyword>
<keyword id="KW-0413">Isomerase</keyword>
<keyword id="KW-1185">Reference proteome</keyword>
<comment type="function">
    <text evidence="1">Catalyzes the reversible isomerization of glucose-6-phosphate to fructose-6-phosphate.</text>
</comment>
<comment type="catalytic activity">
    <reaction evidence="1">
        <text>alpha-D-glucose 6-phosphate = beta-D-fructose 6-phosphate</text>
        <dbReference type="Rhea" id="RHEA:11816"/>
        <dbReference type="ChEBI" id="CHEBI:57634"/>
        <dbReference type="ChEBI" id="CHEBI:58225"/>
        <dbReference type="EC" id="5.3.1.9"/>
    </reaction>
</comment>
<comment type="pathway">
    <text evidence="1">Carbohydrate biosynthesis; gluconeogenesis.</text>
</comment>
<comment type="pathway">
    <text evidence="1">Carbohydrate degradation; glycolysis; D-glyceraldehyde 3-phosphate and glycerone phosphate from D-glucose: step 2/4.</text>
</comment>
<comment type="subcellular location">
    <subcellularLocation>
        <location evidence="1">Cytoplasm</location>
    </subcellularLocation>
</comment>
<comment type="similarity">
    <text evidence="1">Belongs to the GPI family.</text>
</comment>
<dbReference type="EC" id="5.3.1.9" evidence="1"/>
<dbReference type="EMBL" id="AM233362">
    <property type="protein sequence ID" value="CAJ79915.1"/>
    <property type="molecule type" value="Genomic_DNA"/>
</dbReference>
<dbReference type="RefSeq" id="WP_003016778.1">
    <property type="nucleotide sequence ID" value="NZ_CP009694.1"/>
</dbReference>
<dbReference type="SMR" id="Q2A2C5"/>
<dbReference type="KEGG" id="ftl:FTL_1476"/>
<dbReference type="UniPathway" id="UPA00109">
    <property type="reaction ID" value="UER00181"/>
</dbReference>
<dbReference type="UniPathway" id="UPA00138"/>
<dbReference type="Proteomes" id="UP000001944">
    <property type="component" value="Chromosome"/>
</dbReference>
<dbReference type="GO" id="GO:0005829">
    <property type="term" value="C:cytosol"/>
    <property type="evidence" value="ECO:0007669"/>
    <property type="project" value="TreeGrafter"/>
</dbReference>
<dbReference type="GO" id="GO:0097367">
    <property type="term" value="F:carbohydrate derivative binding"/>
    <property type="evidence" value="ECO:0007669"/>
    <property type="project" value="InterPro"/>
</dbReference>
<dbReference type="GO" id="GO:0004347">
    <property type="term" value="F:glucose-6-phosphate isomerase activity"/>
    <property type="evidence" value="ECO:0007669"/>
    <property type="project" value="UniProtKB-UniRule"/>
</dbReference>
<dbReference type="GO" id="GO:0048029">
    <property type="term" value="F:monosaccharide binding"/>
    <property type="evidence" value="ECO:0007669"/>
    <property type="project" value="TreeGrafter"/>
</dbReference>
<dbReference type="GO" id="GO:0006094">
    <property type="term" value="P:gluconeogenesis"/>
    <property type="evidence" value="ECO:0007669"/>
    <property type="project" value="UniProtKB-UniRule"/>
</dbReference>
<dbReference type="GO" id="GO:0051156">
    <property type="term" value="P:glucose 6-phosphate metabolic process"/>
    <property type="evidence" value="ECO:0007669"/>
    <property type="project" value="TreeGrafter"/>
</dbReference>
<dbReference type="GO" id="GO:0006096">
    <property type="term" value="P:glycolytic process"/>
    <property type="evidence" value="ECO:0007669"/>
    <property type="project" value="UniProtKB-UniRule"/>
</dbReference>
<dbReference type="CDD" id="cd05015">
    <property type="entry name" value="SIS_PGI_1"/>
    <property type="match status" value="1"/>
</dbReference>
<dbReference type="CDD" id="cd05016">
    <property type="entry name" value="SIS_PGI_2"/>
    <property type="match status" value="1"/>
</dbReference>
<dbReference type="Gene3D" id="1.10.1390.10">
    <property type="match status" value="1"/>
</dbReference>
<dbReference type="Gene3D" id="3.40.50.10490">
    <property type="entry name" value="Glucose-6-phosphate isomerase like protein, domain 1"/>
    <property type="match status" value="2"/>
</dbReference>
<dbReference type="HAMAP" id="MF_00473">
    <property type="entry name" value="G6P_isomerase"/>
    <property type="match status" value="1"/>
</dbReference>
<dbReference type="InterPro" id="IPR001672">
    <property type="entry name" value="G6P_Isomerase"/>
</dbReference>
<dbReference type="InterPro" id="IPR023096">
    <property type="entry name" value="G6P_Isomerase_C"/>
</dbReference>
<dbReference type="InterPro" id="IPR018189">
    <property type="entry name" value="Phosphoglucose_isomerase_CS"/>
</dbReference>
<dbReference type="InterPro" id="IPR046348">
    <property type="entry name" value="SIS_dom_sf"/>
</dbReference>
<dbReference type="InterPro" id="IPR035476">
    <property type="entry name" value="SIS_PGI_1"/>
</dbReference>
<dbReference type="InterPro" id="IPR035482">
    <property type="entry name" value="SIS_PGI_2"/>
</dbReference>
<dbReference type="NCBIfam" id="NF001211">
    <property type="entry name" value="PRK00179.1"/>
    <property type="match status" value="1"/>
</dbReference>
<dbReference type="PANTHER" id="PTHR11469">
    <property type="entry name" value="GLUCOSE-6-PHOSPHATE ISOMERASE"/>
    <property type="match status" value="1"/>
</dbReference>
<dbReference type="PANTHER" id="PTHR11469:SF1">
    <property type="entry name" value="GLUCOSE-6-PHOSPHATE ISOMERASE"/>
    <property type="match status" value="1"/>
</dbReference>
<dbReference type="Pfam" id="PF00342">
    <property type="entry name" value="PGI"/>
    <property type="match status" value="1"/>
</dbReference>
<dbReference type="PRINTS" id="PR00662">
    <property type="entry name" value="G6PISOMERASE"/>
</dbReference>
<dbReference type="SUPFAM" id="SSF53697">
    <property type="entry name" value="SIS domain"/>
    <property type="match status" value="1"/>
</dbReference>
<dbReference type="PROSITE" id="PS00765">
    <property type="entry name" value="P_GLUCOSE_ISOMERASE_1"/>
    <property type="match status" value="1"/>
</dbReference>
<dbReference type="PROSITE" id="PS00174">
    <property type="entry name" value="P_GLUCOSE_ISOMERASE_2"/>
    <property type="match status" value="1"/>
</dbReference>
<dbReference type="PROSITE" id="PS51463">
    <property type="entry name" value="P_GLUCOSE_ISOMERASE_3"/>
    <property type="match status" value="1"/>
</dbReference>